<sequence length="731" mass="81636">MLSFLRRTLGRRSMRKHAEKERLREAQRAATHIPAAGDAKSIITCRVSLLDGTDVSVDLPKKAKGQELFDQIMYHLDLIESDYFGLRFMDSAQVAHWLDGTKSIKKQVKIGSPYCLHLRVKFYSSEPNNLREELTRYLFVLQLKQDILSGKLECPFDTAVQLAAYNLQAELGDYDLAEHSPELVSEFRFVPIQTEEMELAIFEKWKEYRGQTPAQAETNYLNKAKWLEMYGVDMHVVKARDGNDYSLGLTPTGVLVFEGETKIGLFFWPKITRLDFKKNKLTLVVVEDDDQGKEQEHTFVFRLDHPKACKHLWKCAVEHHAFFRLRGPVQKSSHRSGFIRLGSRFRYSGKTEYQTTKTNKARRSTSFERRPSKRYSRRTLQMKASTTQPEDLGVLNASAQKSDSQQAWGVMSPVPVTSSSSCGAVQVEIENLPQTSATEQHDRKCLPLSVDLLNSPDLLETTIGDVTRTSETSAPFPAPDTINVATRSNELEEFKAECETLKDDTEKLKQLETEQTILPSLRPTIDINVNSQEEVVKLTEKCLNNAIENPALNAVKVPPDFKSNILKAQVEAVHKVTREDSLLTHKNASVQDAATNSTAFNENDVPVCKDSLTPVHGTAADSASVLKDATDELDALLLSLTENLMDHTVTPQVSSPSMITPRWIIPQSATISNGLAGYGASLAGTDECSQKDGFSLISPPAPFLVDAVTSSAPPLPEDSTLKQKCLLTTEL</sequence>
<feature type="chain" id="PRO_0000330355" description="Band 4.1-like protein 5">
    <location>
        <begin position="1"/>
        <end position="731"/>
    </location>
</feature>
<feature type="domain" description="FERM" evidence="3">
    <location>
        <begin position="43"/>
        <end position="327"/>
    </location>
</feature>
<feature type="region of interest" description="Required for interaction with CRB1" evidence="2">
    <location>
        <begin position="29"/>
        <end position="119"/>
    </location>
</feature>
<feature type="region of interest" description="Disordered" evidence="4">
    <location>
        <begin position="352"/>
        <end position="388"/>
    </location>
</feature>
<feature type="compositionally biased region" description="Polar residues" evidence="4">
    <location>
        <begin position="378"/>
        <end position="388"/>
    </location>
</feature>
<feature type="splice variant" id="VSP_033039" description="In isoform 3." evidence="6">
    <original>G</original>
    <variation>GRFSSLLYS</variation>
    <location>
        <position position="393"/>
    </location>
</feature>
<feature type="splice variant" id="VSP_033040" description="In isoform 2." evidence="7 8">
    <original>CLPLSVDLLNSPDLLETTIGDVTRTSETSAPFPAPDTINVATRSNELEEFKAECETLKDD</original>
    <variation>WLSATSDRCQRGGNQWNPRALPPPQTAYRNYTDFVHEHNVKNAGAHHDAQLSGRAAMTEI</variation>
    <location>
        <begin position="445"/>
        <end position="504"/>
    </location>
</feature>
<feature type="splice variant" id="VSP_033041" description="In isoform 2." evidence="7 8">
    <location>
        <begin position="505"/>
        <end position="731"/>
    </location>
</feature>
<feature type="sequence conflict" description="In Ref. 2; BAE39535." evidence="9" ref="2">
    <original>P</original>
    <variation>H</variation>
    <location>
        <position position="113"/>
    </location>
</feature>
<feature type="sequence conflict" description="In Ref. 2; BAC28794." evidence="9" ref="2">
    <original>D</original>
    <variation>Y</variation>
    <location>
        <position position="173"/>
    </location>
</feature>
<feature type="modified residue" description="Omega-N-methylarginine" evidence="11">
    <location sequence="Q8BGS1-2">
        <position position="455"/>
    </location>
</feature>
<name>E41L5_MOUSE</name>
<organism>
    <name type="scientific">Mus musculus</name>
    <name type="common">Mouse</name>
    <dbReference type="NCBI Taxonomy" id="10090"/>
    <lineage>
        <taxon>Eukaryota</taxon>
        <taxon>Metazoa</taxon>
        <taxon>Chordata</taxon>
        <taxon>Craniata</taxon>
        <taxon>Vertebrata</taxon>
        <taxon>Euteleostomi</taxon>
        <taxon>Mammalia</taxon>
        <taxon>Eutheria</taxon>
        <taxon>Euarchontoglires</taxon>
        <taxon>Glires</taxon>
        <taxon>Rodentia</taxon>
        <taxon>Myomorpha</taxon>
        <taxon>Muroidea</taxon>
        <taxon>Muridae</taxon>
        <taxon>Murinae</taxon>
        <taxon>Mus</taxon>
        <taxon>Mus</taxon>
    </lineage>
</organism>
<protein>
    <recommendedName>
        <fullName>Band 4.1-like protein 5</fullName>
    </recommendedName>
    <alternativeName>
        <fullName evidence="10">Erythrocyte membrane protein band 4.1-like 5</fullName>
    </alternativeName>
</protein>
<dbReference type="EMBL" id="AK173198">
    <property type="protein sequence ID" value="BAD32476.1"/>
    <property type="status" value="ALT_INIT"/>
    <property type="molecule type" value="mRNA"/>
</dbReference>
<dbReference type="EMBL" id="AK034676">
    <property type="protein sequence ID" value="BAC28794.1"/>
    <property type="molecule type" value="mRNA"/>
</dbReference>
<dbReference type="EMBL" id="AK044959">
    <property type="protein sequence ID" value="BAC32159.1"/>
    <property type="molecule type" value="mRNA"/>
</dbReference>
<dbReference type="EMBL" id="AK044996">
    <property type="protein sequence ID" value="BAC32177.1"/>
    <property type="molecule type" value="mRNA"/>
</dbReference>
<dbReference type="EMBL" id="AK079301">
    <property type="protein sequence ID" value="BAC37601.1"/>
    <property type="molecule type" value="mRNA"/>
</dbReference>
<dbReference type="EMBL" id="AK136125">
    <property type="protein sequence ID" value="BAE22832.1"/>
    <property type="molecule type" value="mRNA"/>
</dbReference>
<dbReference type="EMBL" id="AK161141">
    <property type="protein sequence ID" value="BAE36211.1"/>
    <property type="molecule type" value="mRNA"/>
</dbReference>
<dbReference type="EMBL" id="AK167449">
    <property type="protein sequence ID" value="BAE39535.1"/>
    <property type="molecule type" value="mRNA"/>
</dbReference>
<dbReference type="EMBL" id="BC003937">
    <property type="protein sequence ID" value="AAH03937.1"/>
    <property type="molecule type" value="mRNA"/>
</dbReference>
<dbReference type="EMBL" id="BC011476">
    <property type="protein sequence ID" value="AAH11476.1"/>
    <property type="molecule type" value="mRNA"/>
</dbReference>
<dbReference type="CCDS" id="CCDS15226.1">
    <molecule id="Q8BGS1-1"/>
</dbReference>
<dbReference type="CCDS" id="CCDS48339.1">
    <molecule id="Q8BGS1-2"/>
</dbReference>
<dbReference type="RefSeq" id="NP_001106887.1">
    <molecule id="Q8BGS1-2"/>
    <property type="nucleotide sequence ID" value="NM_001113416.1"/>
</dbReference>
<dbReference type="RefSeq" id="NP_663481.2">
    <molecule id="Q8BGS1-1"/>
    <property type="nucleotide sequence ID" value="NM_145506.4"/>
</dbReference>
<dbReference type="RefSeq" id="XP_006529460.1">
    <molecule id="Q8BGS1-1"/>
    <property type="nucleotide sequence ID" value="XM_006529397.3"/>
</dbReference>
<dbReference type="RefSeq" id="XP_006529461.1">
    <molecule id="Q8BGS1-1"/>
    <property type="nucleotide sequence ID" value="XM_006529398.3"/>
</dbReference>
<dbReference type="RefSeq" id="XP_006529463.1">
    <molecule id="Q8BGS1-2"/>
    <property type="nucleotide sequence ID" value="XM_006529400.3"/>
</dbReference>
<dbReference type="SMR" id="Q8BGS1"/>
<dbReference type="BioGRID" id="230501">
    <property type="interactions" value="1"/>
</dbReference>
<dbReference type="FunCoup" id="Q8BGS1">
    <property type="interactions" value="905"/>
</dbReference>
<dbReference type="IntAct" id="Q8BGS1">
    <property type="interactions" value="3"/>
</dbReference>
<dbReference type="STRING" id="10090.ENSMUSP00000058966"/>
<dbReference type="iPTMnet" id="Q8BGS1"/>
<dbReference type="PhosphoSitePlus" id="Q8BGS1"/>
<dbReference type="jPOST" id="Q8BGS1"/>
<dbReference type="PaxDb" id="10090-ENSMUSP00000128374"/>
<dbReference type="PeptideAtlas" id="Q8BGS1"/>
<dbReference type="ProteomicsDB" id="277538">
    <molecule id="Q8BGS1-1"/>
</dbReference>
<dbReference type="ProteomicsDB" id="277539">
    <molecule id="Q8BGS1-2"/>
</dbReference>
<dbReference type="ProteomicsDB" id="277540">
    <molecule id="Q8BGS1-3"/>
</dbReference>
<dbReference type="Pumba" id="Q8BGS1"/>
<dbReference type="Antibodypedia" id="33383">
    <property type="antibodies" value="124 antibodies from 26 providers"/>
</dbReference>
<dbReference type="Ensembl" id="ENSMUST00000027632.14">
    <molecule id="Q8BGS1-2"/>
    <property type="protein sequence ID" value="ENSMUSP00000027632.8"/>
    <property type="gene ID" value="ENSMUSG00000026383.15"/>
</dbReference>
<dbReference type="Ensembl" id="ENSMUST00000052404.13">
    <molecule id="Q8BGS1-1"/>
    <property type="protein sequence ID" value="ENSMUSP00000058966.7"/>
    <property type="gene ID" value="ENSMUSG00000026383.15"/>
</dbReference>
<dbReference type="Ensembl" id="ENSMUST00000163147.8">
    <molecule id="Q8BGS1-3"/>
    <property type="protein sequence ID" value="ENSMUSP00000128374.2"/>
    <property type="gene ID" value="ENSMUSG00000026383.15"/>
</dbReference>
<dbReference type="Ensembl" id="ENSMUST00000191046.7">
    <molecule id="Q8BGS1-2"/>
    <property type="protein sequence ID" value="ENSMUSP00000140227.2"/>
    <property type="gene ID" value="ENSMUSG00000026383.15"/>
</dbReference>
<dbReference type="GeneID" id="226352"/>
<dbReference type="KEGG" id="mmu:226352"/>
<dbReference type="UCSC" id="uc007ciw.2">
    <molecule id="Q8BGS1-1"/>
    <property type="organism name" value="mouse"/>
</dbReference>
<dbReference type="UCSC" id="uc007cix.2">
    <molecule id="Q8BGS1-2"/>
    <property type="organism name" value="mouse"/>
</dbReference>
<dbReference type="UCSC" id="uc011wqs.1">
    <molecule id="Q8BGS1-3"/>
    <property type="organism name" value="mouse"/>
</dbReference>
<dbReference type="AGR" id="MGI:103006"/>
<dbReference type="CTD" id="57669"/>
<dbReference type="MGI" id="MGI:103006">
    <property type="gene designation" value="Epb41l5"/>
</dbReference>
<dbReference type="VEuPathDB" id="HostDB:ENSMUSG00000026383"/>
<dbReference type="eggNOG" id="KOG3530">
    <property type="taxonomic scope" value="Eukaryota"/>
</dbReference>
<dbReference type="GeneTree" id="ENSGT00940000156332"/>
<dbReference type="HOGENOM" id="CLU_003623_5_1_1"/>
<dbReference type="InParanoid" id="Q8BGS1"/>
<dbReference type="OMA" id="DCCQHGG"/>
<dbReference type="OrthoDB" id="53534at9989"/>
<dbReference type="PhylomeDB" id="Q8BGS1"/>
<dbReference type="TreeFam" id="TF319780"/>
<dbReference type="Reactome" id="R-MMU-6794361">
    <property type="pathway name" value="Neurexins and neuroligins"/>
</dbReference>
<dbReference type="BioGRID-ORCS" id="226352">
    <property type="hits" value="1 hit in 44 CRISPR screens"/>
</dbReference>
<dbReference type="ChiTaRS" id="Epb41l5">
    <property type="organism name" value="mouse"/>
</dbReference>
<dbReference type="PRO" id="PR:Q8BGS1"/>
<dbReference type="Proteomes" id="UP000000589">
    <property type="component" value="Chromosome 1"/>
</dbReference>
<dbReference type="RNAct" id="Q8BGS1">
    <property type="molecule type" value="protein"/>
</dbReference>
<dbReference type="Bgee" id="ENSMUSG00000026383">
    <property type="expression patterns" value="Expressed in secondary oocyte and 194 other cell types or tissues"/>
</dbReference>
<dbReference type="ExpressionAtlas" id="Q8BGS1">
    <property type="expression patterns" value="baseline and differential"/>
</dbReference>
<dbReference type="GO" id="GO:0005912">
    <property type="term" value="C:adherens junction"/>
    <property type="evidence" value="ECO:0007669"/>
    <property type="project" value="UniProtKB-SubCell"/>
</dbReference>
<dbReference type="GO" id="GO:0031252">
    <property type="term" value="C:cell leading edge"/>
    <property type="evidence" value="ECO:0000314"/>
    <property type="project" value="MGI"/>
</dbReference>
<dbReference type="GO" id="GO:0005856">
    <property type="term" value="C:cytoskeleton"/>
    <property type="evidence" value="ECO:0007669"/>
    <property type="project" value="InterPro"/>
</dbReference>
<dbReference type="GO" id="GO:0005829">
    <property type="term" value="C:cytosol"/>
    <property type="evidence" value="ECO:0007669"/>
    <property type="project" value="Ensembl"/>
</dbReference>
<dbReference type="GO" id="GO:0005925">
    <property type="term" value="C:focal adhesion"/>
    <property type="evidence" value="ECO:0000314"/>
    <property type="project" value="MGI"/>
</dbReference>
<dbReference type="GO" id="GO:0005654">
    <property type="term" value="C:nucleoplasm"/>
    <property type="evidence" value="ECO:0007669"/>
    <property type="project" value="Ensembl"/>
</dbReference>
<dbReference type="GO" id="GO:0001917">
    <property type="term" value="C:photoreceptor inner segment"/>
    <property type="evidence" value="ECO:0007669"/>
    <property type="project" value="UniProtKB-SubCell"/>
</dbReference>
<dbReference type="GO" id="GO:0005886">
    <property type="term" value="C:plasma membrane"/>
    <property type="evidence" value="ECO:0000314"/>
    <property type="project" value="UniProtKB"/>
</dbReference>
<dbReference type="GO" id="GO:0032587">
    <property type="term" value="C:ruffle membrane"/>
    <property type="evidence" value="ECO:0000314"/>
    <property type="project" value="MGI"/>
</dbReference>
<dbReference type="GO" id="GO:0008092">
    <property type="term" value="F:cytoskeletal protein binding"/>
    <property type="evidence" value="ECO:0007669"/>
    <property type="project" value="InterPro"/>
</dbReference>
<dbReference type="GO" id="GO:0019904">
    <property type="term" value="F:protein domain specific binding"/>
    <property type="evidence" value="ECO:0000353"/>
    <property type="project" value="MGI"/>
</dbReference>
<dbReference type="GO" id="GO:0030036">
    <property type="term" value="P:actin cytoskeleton organization"/>
    <property type="evidence" value="ECO:0000314"/>
    <property type="project" value="MGI"/>
</dbReference>
<dbReference type="GO" id="GO:0031032">
    <property type="term" value="P:actomyosin structure organization"/>
    <property type="evidence" value="ECO:0000314"/>
    <property type="project" value="MGI"/>
</dbReference>
<dbReference type="GO" id="GO:0003383">
    <property type="term" value="P:apical constriction"/>
    <property type="evidence" value="ECO:0000314"/>
    <property type="project" value="MGI"/>
</dbReference>
<dbReference type="GO" id="GO:0048318">
    <property type="term" value="P:axial mesoderm development"/>
    <property type="evidence" value="ECO:0000315"/>
    <property type="project" value="MGI"/>
</dbReference>
<dbReference type="GO" id="GO:0048319">
    <property type="term" value="P:axial mesoderm morphogenesis"/>
    <property type="evidence" value="ECO:0000315"/>
    <property type="project" value="MGI"/>
</dbReference>
<dbReference type="GO" id="GO:0000902">
    <property type="term" value="P:cell morphogenesis"/>
    <property type="evidence" value="ECO:0000315"/>
    <property type="project" value="MGI"/>
</dbReference>
<dbReference type="GO" id="GO:0071560">
    <property type="term" value="P:cellular response to transforming growth factor beta stimulus"/>
    <property type="evidence" value="ECO:0000314"/>
    <property type="project" value="MGI"/>
</dbReference>
<dbReference type="GO" id="GO:0007398">
    <property type="term" value="P:ectoderm development"/>
    <property type="evidence" value="ECO:0000315"/>
    <property type="project" value="MGI"/>
</dbReference>
<dbReference type="GO" id="GO:0048617">
    <property type="term" value="P:embryonic foregut morphogenesis"/>
    <property type="evidence" value="ECO:0000315"/>
    <property type="project" value="MGI"/>
</dbReference>
<dbReference type="GO" id="GO:0007492">
    <property type="term" value="P:endoderm development"/>
    <property type="evidence" value="ECO:0000315"/>
    <property type="project" value="MGI"/>
</dbReference>
<dbReference type="GO" id="GO:0003382">
    <property type="term" value="P:epithelial cell morphogenesis"/>
    <property type="evidence" value="ECO:0000315"/>
    <property type="project" value="MGI"/>
</dbReference>
<dbReference type="GO" id="GO:0001837">
    <property type="term" value="P:epithelial to mesenchymal transition"/>
    <property type="evidence" value="ECO:0000315"/>
    <property type="project" value="MGI"/>
</dbReference>
<dbReference type="GO" id="GO:0001701">
    <property type="term" value="P:in utero embryonic development"/>
    <property type="evidence" value="ECO:0000315"/>
    <property type="project" value="MGI"/>
</dbReference>
<dbReference type="GO" id="GO:0070986">
    <property type="term" value="P:left/right axis specification"/>
    <property type="evidence" value="ECO:0000315"/>
    <property type="project" value="MGI"/>
</dbReference>
<dbReference type="GO" id="GO:0007498">
    <property type="term" value="P:mesoderm development"/>
    <property type="evidence" value="ECO:0000315"/>
    <property type="project" value="MGI"/>
</dbReference>
<dbReference type="GO" id="GO:0007509">
    <property type="term" value="P:mesoderm migration involved in gastrulation"/>
    <property type="evidence" value="ECO:0000315"/>
    <property type="project" value="MGI"/>
</dbReference>
<dbReference type="GO" id="GO:0022408">
    <property type="term" value="P:negative regulation of cell-cell adhesion"/>
    <property type="evidence" value="ECO:0000315"/>
    <property type="project" value="MGI"/>
</dbReference>
<dbReference type="GO" id="GO:0001839">
    <property type="term" value="P:neural plate morphogenesis"/>
    <property type="evidence" value="ECO:0000315"/>
    <property type="project" value="MGI"/>
</dbReference>
<dbReference type="GO" id="GO:0048339">
    <property type="term" value="P:paraxial mesoderm development"/>
    <property type="evidence" value="ECO:0000315"/>
    <property type="project" value="MGI"/>
</dbReference>
<dbReference type="GO" id="GO:0001954">
    <property type="term" value="P:positive regulation of cell-matrix adhesion"/>
    <property type="evidence" value="ECO:0000315"/>
    <property type="project" value="MGI"/>
</dbReference>
<dbReference type="GO" id="GO:0010634">
    <property type="term" value="P:positive regulation of epithelial cell migration"/>
    <property type="evidence" value="ECO:0000315"/>
    <property type="project" value="MGI"/>
</dbReference>
<dbReference type="GO" id="GO:0051894">
    <property type="term" value="P:positive regulation of focal adhesion assembly"/>
    <property type="evidence" value="ECO:0000315"/>
    <property type="project" value="MGI"/>
</dbReference>
<dbReference type="GO" id="GO:0010608">
    <property type="term" value="P:post-transcriptional regulation of gene expression"/>
    <property type="evidence" value="ECO:0000315"/>
    <property type="project" value="MGI"/>
</dbReference>
<dbReference type="GO" id="GO:0070201">
    <property type="term" value="P:regulation of establishment of protein localization"/>
    <property type="evidence" value="ECO:0000314"/>
    <property type="project" value="MGI"/>
</dbReference>
<dbReference type="GO" id="GO:0032525">
    <property type="term" value="P:somite rostral/caudal axis specification"/>
    <property type="evidence" value="ECO:0000315"/>
    <property type="project" value="MGI"/>
</dbReference>
<dbReference type="GO" id="GO:0001756">
    <property type="term" value="P:somitogenesis"/>
    <property type="evidence" value="ECO:0000315"/>
    <property type="project" value="MGI"/>
</dbReference>
<dbReference type="GO" id="GO:0006931">
    <property type="term" value="P:substrate-dependent cell migration, cell attachment to substrate"/>
    <property type="evidence" value="ECO:0000315"/>
    <property type="project" value="MGI"/>
</dbReference>
<dbReference type="GO" id="GO:0009826">
    <property type="term" value="P:unidimensional cell growth"/>
    <property type="evidence" value="ECO:0000314"/>
    <property type="project" value="MGI"/>
</dbReference>
<dbReference type="CDD" id="cd14473">
    <property type="entry name" value="FERM_B-lobe"/>
    <property type="match status" value="1"/>
</dbReference>
<dbReference type="CDD" id="cd13186">
    <property type="entry name" value="FERM_C_NBL4_NBL5"/>
    <property type="match status" value="1"/>
</dbReference>
<dbReference type="CDD" id="cd17205">
    <property type="entry name" value="FERM_F1_EPB41L5"/>
    <property type="match status" value="1"/>
</dbReference>
<dbReference type="FunFam" id="2.30.29.30:FF:000002">
    <property type="entry name" value="Band 4.1-like protein 5 isoform 1"/>
    <property type="match status" value="1"/>
</dbReference>
<dbReference type="FunFam" id="3.10.20.90:FF:000024">
    <property type="entry name" value="Erythrocyte membrane protein band 4.1-like 5"/>
    <property type="match status" value="1"/>
</dbReference>
<dbReference type="FunFam" id="1.20.80.10:FF:000003">
    <property type="entry name" value="Tyrosine-protein phosphatase non-receptor type 4"/>
    <property type="match status" value="1"/>
</dbReference>
<dbReference type="Gene3D" id="1.20.80.10">
    <property type="match status" value="1"/>
</dbReference>
<dbReference type="Gene3D" id="3.10.20.90">
    <property type="entry name" value="Phosphatidylinositol 3-kinase Catalytic Subunit, Chain A, domain 1"/>
    <property type="match status" value="1"/>
</dbReference>
<dbReference type="Gene3D" id="2.30.29.30">
    <property type="entry name" value="Pleckstrin-homology domain (PH domain)/Phosphotyrosine-binding domain (PTB)"/>
    <property type="match status" value="1"/>
</dbReference>
<dbReference type="InterPro" id="IPR019749">
    <property type="entry name" value="Band_41_domain"/>
</dbReference>
<dbReference type="InterPro" id="IPR000798">
    <property type="entry name" value="Ez/rad/moesin-like"/>
</dbReference>
<dbReference type="InterPro" id="IPR014847">
    <property type="entry name" value="FA"/>
</dbReference>
<dbReference type="InterPro" id="IPR014352">
    <property type="entry name" value="FERM/acyl-CoA-bd_prot_sf"/>
</dbReference>
<dbReference type="InterPro" id="IPR035963">
    <property type="entry name" value="FERM_2"/>
</dbReference>
<dbReference type="InterPro" id="IPR019748">
    <property type="entry name" value="FERM_central"/>
</dbReference>
<dbReference type="InterPro" id="IPR019747">
    <property type="entry name" value="FERM_CS"/>
</dbReference>
<dbReference type="InterPro" id="IPR000299">
    <property type="entry name" value="FERM_domain"/>
</dbReference>
<dbReference type="InterPro" id="IPR018979">
    <property type="entry name" value="FERM_N"/>
</dbReference>
<dbReference type="InterPro" id="IPR018980">
    <property type="entry name" value="FERM_PH-like_C"/>
</dbReference>
<dbReference type="InterPro" id="IPR011993">
    <property type="entry name" value="PH-like_dom_sf"/>
</dbReference>
<dbReference type="InterPro" id="IPR029071">
    <property type="entry name" value="Ubiquitin-like_domsf"/>
</dbReference>
<dbReference type="PANTHER" id="PTHR23280">
    <property type="entry name" value="4.1 G PROTEIN"/>
    <property type="match status" value="1"/>
</dbReference>
<dbReference type="PANTHER" id="PTHR23280:SF15">
    <property type="entry name" value="BAND 4.1-LIKE PROTEIN 5"/>
    <property type="match status" value="1"/>
</dbReference>
<dbReference type="Pfam" id="PF08736">
    <property type="entry name" value="FA"/>
    <property type="match status" value="1"/>
</dbReference>
<dbReference type="Pfam" id="PF09380">
    <property type="entry name" value="FERM_C"/>
    <property type="match status" value="1"/>
</dbReference>
<dbReference type="Pfam" id="PF00373">
    <property type="entry name" value="FERM_M"/>
    <property type="match status" value="1"/>
</dbReference>
<dbReference type="Pfam" id="PF09379">
    <property type="entry name" value="FERM_N"/>
    <property type="match status" value="1"/>
</dbReference>
<dbReference type="PRINTS" id="PR00935">
    <property type="entry name" value="BAND41"/>
</dbReference>
<dbReference type="PRINTS" id="PR00661">
    <property type="entry name" value="ERMFAMILY"/>
</dbReference>
<dbReference type="SMART" id="SM00295">
    <property type="entry name" value="B41"/>
    <property type="match status" value="1"/>
</dbReference>
<dbReference type="SMART" id="SM01195">
    <property type="entry name" value="FA"/>
    <property type="match status" value="1"/>
</dbReference>
<dbReference type="SMART" id="SM01196">
    <property type="entry name" value="FERM_C"/>
    <property type="match status" value="1"/>
</dbReference>
<dbReference type="SUPFAM" id="SSF50729">
    <property type="entry name" value="PH domain-like"/>
    <property type="match status" value="1"/>
</dbReference>
<dbReference type="SUPFAM" id="SSF47031">
    <property type="entry name" value="Second domain of FERM"/>
    <property type="match status" value="1"/>
</dbReference>
<dbReference type="SUPFAM" id="SSF54236">
    <property type="entry name" value="Ubiquitin-like"/>
    <property type="match status" value="1"/>
</dbReference>
<dbReference type="PROSITE" id="PS00660">
    <property type="entry name" value="FERM_1"/>
    <property type="match status" value="1"/>
</dbReference>
<dbReference type="PROSITE" id="PS00661">
    <property type="entry name" value="FERM_2"/>
    <property type="match status" value="1"/>
</dbReference>
<dbReference type="PROSITE" id="PS50057">
    <property type="entry name" value="FERM_3"/>
    <property type="match status" value="1"/>
</dbReference>
<reference key="1">
    <citation type="journal article" date="2004" name="DNA Res.">
        <title>Prediction of the coding sequences of mouse homologues of KIAA gene: IV. The complete nucleotide sequences of 500 mouse KIAA-homologous cDNAs identified by screening of terminal sequences of cDNA clones randomly sampled from size-fractionated libraries.</title>
        <authorList>
            <person name="Okazaki N."/>
            <person name="Kikuno R."/>
            <person name="Ohara R."/>
            <person name="Inamoto S."/>
            <person name="Koseki H."/>
            <person name="Hiraoka S."/>
            <person name="Saga Y."/>
            <person name="Seino S."/>
            <person name="Nishimura M."/>
            <person name="Kaisho T."/>
            <person name="Hoshino K."/>
            <person name="Kitamura H."/>
            <person name="Nagase T."/>
            <person name="Ohara O."/>
            <person name="Koga H."/>
        </authorList>
    </citation>
    <scope>NUCLEOTIDE SEQUENCE [LARGE SCALE MRNA] (ISOFORM 3)</scope>
    <source>
        <tissue>Embryonic tail</tissue>
    </source>
</reference>
<reference key="2">
    <citation type="journal article" date="2005" name="Science">
        <title>The transcriptional landscape of the mammalian genome.</title>
        <authorList>
            <person name="Carninci P."/>
            <person name="Kasukawa T."/>
            <person name="Katayama S."/>
            <person name="Gough J."/>
            <person name="Frith M.C."/>
            <person name="Maeda N."/>
            <person name="Oyama R."/>
            <person name="Ravasi T."/>
            <person name="Lenhard B."/>
            <person name="Wells C."/>
            <person name="Kodzius R."/>
            <person name="Shimokawa K."/>
            <person name="Bajic V.B."/>
            <person name="Brenner S.E."/>
            <person name="Batalov S."/>
            <person name="Forrest A.R."/>
            <person name="Zavolan M."/>
            <person name="Davis M.J."/>
            <person name="Wilming L.G."/>
            <person name="Aidinis V."/>
            <person name="Allen J.E."/>
            <person name="Ambesi-Impiombato A."/>
            <person name="Apweiler R."/>
            <person name="Aturaliya R.N."/>
            <person name="Bailey T.L."/>
            <person name="Bansal M."/>
            <person name="Baxter L."/>
            <person name="Beisel K.W."/>
            <person name="Bersano T."/>
            <person name="Bono H."/>
            <person name="Chalk A.M."/>
            <person name="Chiu K.P."/>
            <person name="Choudhary V."/>
            <person name="Christoffels A."/>
            <person name="Clutterbuck D.R."/>
            <person name="Crowe M.L."/>
            <person name="Dalla E."/>
            <person name="Dalrymple B.P."/>
            <person name="de Bono B."/>
            <person name="Della Gatta G."/>
            <person name="di Bernardo D."/>
            <person name="Down T."/>
            <person name="Engstrom P."/>
            <person name="Fagiolini M."/>
            <person name="Faulkner G."/>
            <person name="Fletcher C.F."/>
            <person name="Fukushima T."/>
            <person name="Furuno M."/>
            <person name="Futaki S."/>
            <person name="Gariboldi M."/>
            <person name="Georgii-Hemming P."/>
            <person name="Gingeras T.R."/>
            <person name="Gojobori T."/>
            <person name="Green R.E."/>
            <person name="Gustincich S."/>
            <person name="Harbers M."/>
            <person name="Hayashi Y."/>
            <person name="Hensch T.K."/>
            <person name="Hirokawa N."/>
            <person name="Hill D."/>
            <person name="Huminiecki L."/>
            <person name="Iacono M."/>
            <person name="Ikeo K."/>
            <person name="Iwama A."/>
            <person name="Ishikawa T."/>
            <person name="Jakt M."/>
            <person name="Kanapin A."/>
            <person name="Katoh M."/>
            <person name="Kawasawa Y."/>
            <person name="Kelso J."/>
            <person name="Kitamura H."/>
            <person name="Kitano H."/>
            <person name="Kollias G."/>
            <person name="Krishnan S.P."/>
            <person name="Kruger A."/>
            <person name="Kummerfeld S.K."/>
            <person name="Kurochkin I.V."/>
            <person name="Lareau L.F."/>
            <person name="Lazarevic D."/>
            <person name="Lipovich L."/>
            <person name="Liu J."/>
            <person name="Liuni S."/>
            <person name="McWilliam S."/>
            <person name="Madan Babu M."/>
            <person name="Madera M."/>
            <person name="Marchionni L."/>
            <person name="Matsuda H."/>
            <person name="Matsuzawa S."/>
            <person name="Miki H."/>
            <person name="Mignone F."/>
            <person name="Miyake S."/>
            <person name="Morris K."/>
            <person name="Mottagui-Tabar S."/>
            <person name="Mulder N."/>
            <person name="Nakano N."/>
            <person name="Nakauchi H."/>
            <person name="Ng P."/>
            <person name="Nilsson R."/>
            <person name="Nishiguchi S."/>
            <person name="Nishikawa S."/>
            <person name="Nori F."/>
            <person name="Ohara O."/>
            <person name="Okazaki Y."/>
            <person name="Orlando V."/>
            <person name="Pang K.C."/>
            <person name="Pavan W.J."/>
            <person name="Pavesi G."/>
            <person name="Pesole G."/>
            <person name="Petrovsky N."/>
            <person name="Piazza S."/>
            <person name="Reed J."/>
            <person name="Reid J.F."/>
            <person name="Ring B.Z."/>
            <person name="Ringwald M."/>
            <person name="Rost B."/>
            <person name="Ruan Y."/>
            <person name="Salzberg S.L."/>
            <person name="Sandelin A."/>
            <person name="Schneider C."/>
            <person name="Schoenbach C."/>
            <person name="Sekiguchi K."/>
            <person name="Semple C.A."/>
            <person name="Seno S."/>
            <person name="Sessa L."/>
            <person name="Sheng Y."/>
            <person name="Shibata Y."/>
            <person name="Shimada H."/>
            <person name="Shimada K."/>
            <person name="Silva D."/>
            <person name="Sinclair B."/>
            <person name="Sperling S."/>
            <person name="Stupka E."/>
            <person name="Sugiura K."/>
            <person name="Sultana R."/>
            <person name="Takenaka Y."/>
            <person name="Taki K."/>
            <person name="Tammoja K."/>
            <person name="Tan S.L."/>
            <person name="Tang S."/>
            <person name="Taylor M.S."/>
            <person name="Tegner J."/>
            <person name="Teichmann S.A."/>
            <person name="Ueda H.R."/>
            <person name="van Nimwegen E."/>
            <person name="Verardo R."/>
            <person name="Wei C.L."/>
            <person name="Yagi K."/>
            <person name="Yamanishi H."/>
            <person name="Zabarovsky E."/>
            <person name="Zhu S."/>
            <person name="Zimmer A."/>
            <person name="Hide W."/>
            <person name="Bult C."/>
            <person name="Grimmond S.M."/>
            <person name="Teasdale R.D."/>
            <person name="Liu E.T."/>
            <person name="Brusic V."/>
            <person name="Quackenbush J."/>
            <person name="Wahlestedt C."/>
            <person name="Mattick J.S."/>
            <person name="Hume D.A."/>
            <person name="Kai C."/>
            <person name="Sasaki D."/>
            <person name="Tomaru Y."/>
            <person name="Fukuda S."/>
            <person name="Kanamori-Katayama M."/>
            <person name="Suzuki M."/>
            <person name="Aoki J."/>
            <person name="Arakawa T."/>
            <person name="Iida J."/>
            <person name="Imamura K."/>
            <person name="Itoh M."/>
            <person name="Kato T."/>
            <person name="Kawaji H."/>
            <person name="Kawagashira N."/>
            <person name="Kawashima T."/>
            <person name="Kojima M."/>
            <person name="Kondo S."/>
            <person name="Konno H."/>
            <person name="Nakano K."/>
            <person name="Ninomiya N."/>
            <person name="Nishio T."/>
            <person name="Okada M."/>
            <person name="Plessy C."/>
            <person name="Shibata K."/>
            <person name="Shiraki T."/>
            <person name="Suzuki S."/>
            <person name="Tagami M."/>
            <person name="Waki K."/>
            <person name="Watahiki A."/>
            <person name="Okamura-Oho Y."/>
            <person name="Suzuki H."/>
            <person name="Kawai J."/>
            <person name="Hayashizaki Y."/>
        </authorList>
    </citation>
    <scope>NUCLEOTIDE SEQUENCE [LARGE SCALE MRNA] (ISOFORMS 1 AND 2)</scope>
    <source>
        <strain>C57BL/6J</strain>
        <tissue>Embryo</tissue>
        <tissue>Skin</tissue>
        <tissue>Urinary bladder</tissue>
    </source>
</reference>
<reference key="3">
    <citation type="journal article" date="2004" name="Genome Res.">
        <title>The status, quality, and expansion of the NIH full-length cDNA project: the Mammalian Gene Collection (MGC).</title>
        <authorList>
            <consortium name="The MGC Project Team"/>
        </authorList>
    </citation>
    <scope>NUCLEOTIDE SEQUENCE [LARGE SCALE MRNA] (ISOFORM 2)</scope>
    <source>
        <strain>Czech II</strain>
        <tissue>Mammary tumor</tissue>
    </source>
</reference>
<reference key="4">
    <citation type="journal article" date="2007" name="Exp. Cell Res.">
        <title>FERM protein EPB41L5 is a novel member of the mammalian CRB-MPP5 polarity complex.</title>
        <authorList>
            <person name="Gosens I."/>
            <person name="Sessa A."/>
            <person name="den Hollander A.I."/>
            <person name="Letteboer S.J.F."/>
            <person name="Belloni V."/>
            <person name="Arends M.L."/>
            <person name="Le Bivic A."/>
            <person name="Cremers F.P.M."/>
            <person name="Broccoli V."/>
            <person name="Roepman R."/>
        </authorList>
    </citation>
    <scope>SUBCELLULAR LOCATION</scope>
    <scope>TISSUE SPECIFICITY</scope>
    <scope>DEVELOPMENTAL STAGE</scope>
</reference>
<reference key="5">
    <citation type="journal article" date="2010" name="Cell">
        <title>A tissue-specific atlas of mouse protein phosphorylation and expression.</title>
        <authorList>
            <person name="Huttlin E.L."/>
            <person name="Jedrychowski M.P."/>
            <person name="Elias J.E."/>
            <person name="Goswami T."/>
            <person name="Rad R."/>
            <person name="Beausoleil S.A."/>
            <person name="Villen J."/>
            <person name="Haas W."/>
            <person name="Sowa M.E."/>
            <person name="Gygi S.P."/>
        </authorList>
    </citation>
    <scope>IDENTIFICATION BY MASS SPECTROMETRY [LARGE SCALE ANALYSIS]</scope>
    <source>
        <tissue>Kidney</tissue>
        <tissue>Liver</tissue>
        <tissue>Lung</tissue>
        <tissue>Pancreas</tissue>
        <tissue>Testis</tissue>
    </source>
</reference>
<reference key="6">
    <citation type="journal article" date="2014" name="Mol. Cell. Proteomics">
        <title>Immunoaffinity enrichment and mass spectrometry analysis of protein methylation.</title>
        <authorList>
            <person name="Guo A."/>
            <person name="Gu H."/>
            <person name="Zhou J."/>
            <person name="Mulhern D."/>
            <person name="Wang Y."/>
            <person name="Lee K.A."/>
            <person name="Yang V."/>
            <person name="Aguiar M."/>
            <person name="Kornhauser J."/>
            <person name="Jia X."/>
            <person name="Ren J."/>
            <person name="Beausoleil S.A."/>
            <person name="Silva J.C."/>
            <person name="Vemulapalli V."/>
            <person name="Bedford M.T."/>
            <person name="Comb M.J."/>
        </authorList>
    </citation>
    <scope>METHYLATION [LARGE SCALE ANALYSIS] AT ARG-455 (ISOFORM 2)</scope>
    <scope>IDENTIFICATION BY MASS SPECTROMETRY [LARGE SCALE ANALYSIS]</scope>
    <source>
        <tissue>Embryo</tissue>
    </source>
</reference>
<comment type="function">
    <text evidence="2">Plays a role in the formation and organization of tight junctions during the establishment of polarity in epithelial cells.</text>
</comment>
<comment type="subunit">
    <text evidence="2">Component of a complex composed of PALS1, CRB1 and EPB41L5 (By similarity). Within the complex, interacts (via FERM domain) with PALS1 (via HOOK domain) and with CRB1 (via intracellular domain) (By similarity). Interacts with CRB2 (via intracellular domain) (By similarity). Interacts with CRB3 (via intracellular domain) (By similarity).</text>
</comment>
<comment type="subcellular location">
    <subcellularLocation>
        <location evidence="5">Cytoplasm</location>
    </subcellularLocation>
    <subcellularLocation>
        <location evidence="5">Cell junction</location>
        <location evidence="5">Adherens junction</location>
    </subcellularLocation>
    <subcellularLocation>
        <location evidence="5">Cell membrane</location>
        <topology evidence="9">Peripheral membrane protein</topology>
    </subcellularLocation>
    <subcellularLocation>
        <location evidence="1">Photoreceptor inner segment</location>
    </subcellularLocation>
</comment>
<comment type="alternative products">
    <event type="alternative splicing"/>
    <isoform>
        <id>Q8BGS1-1</id>
        <name>1</name>
        <sequence type="displayed"/>
    </isoform>
    <isoform>
        <id>Q8BGS1-2</id>
        <name>2</name>
        <sequence type="described" ref="VSP_033040 VSP_033041"/>
    </isoform>
    <isoform>
        <id>Q8BGS1-3</id>
        <name>3</name>
        <sequence type="described" ref="VSP_033039"/>
    </isoform>
</comment>
<comment type="tissue specificity">
    <text evidence="5">In the retina, expressed at the outer limiting membrane, retinal pigment epithelium, outer nuclear layer and outer plexiform layer (at protein level) (PubMed:17920587). Also detected in the inner segments (at protein level) (PubMed:17920587). Expressed at the basolateral and apical sides of the mesonephric tubules in the kidney (at protein level) (PubMed:17920587).</text>
</comment>
<comment type="developmental stage">
    <text evidence="5">At 10.5 dpc, strongly expressed in the developing neural tube and optic vesicle, as well as in the branchial arches and kidney (PubMed:17920587). In the developing kidney, detected in the mesonephrotic tubules (PubMed:17920587). At 11.5 dpc, expressed along the entire cranial-caudal length of the developing neural tube, including the anterior forebrain and the posterior spinal cord (PubMed:17920587). Always restricted to the ventricular layer, where proliferative cells are located (PubMed:17920587). Conversely, not detected in postmitotic neural compartments (PubMed:17920587). In the developing lung, at 11.5 dpc, expressed in the internal endodermal layer and in particular in the nascent bronchial tips (PubMed:17920587). At 12.5 dpc, expressed in the optic vesicle, detected mainly in the retinal layer (PubMed:17920587). The retinal pigment epithelium shows only background levels (PubMed:17920587). At 15.5 dpc expressed at the basolateral side of the plasma membrane in brain, spinal cord, kidney, testis, intestine, skin, and muscles (PubMed:17920587).</text>
</comment>
<comment type="sequence caution" evidence="9">
    <conflict type="erroneous initiation">
        <sequence resource="EMBL-CDS" id="BAD32476"/>
    </conflict>
</comment>
<accession>Q8BGS1</accession>
<accession>Q3TJG0</accession>
<accession>Q69ZG8</accession>
<accession>Q8BSC9</accession>
<accession>Q99KZ8</accession>
<evidence type="ECO:0000250" key="1">
    <source>
        <dbReference type="UniProtKB" id="Q5FVG2"/>
    </source>
</evidence>
<evidence type="ECO:0000250" key="2">
    <source>
        <dbReference type="UniProtKB" id="Q9HCM4"/>
    </source>
</evidence>
<evidence type="ECO:0000255" key="3">
    <source>
        <dbReference type="PROSITE-ProRule" id="PRU00084"/>
    </source>
</evidence>
<evidence type="ECO:0000256" key="4">
    <source>
        <dbReference type="SAM" id="MobiDB-lite"/>
    </source>
</evidence>
<evidence type="ECO:0000269" key="5">
    <source>
    </source>
</evidence>
<evidence type="ECO:0000303" key="6">
    <source>
    </source>
</evidence>
<evidence type="ECO:0000303" key="7">
    <source>
    </source>
</evidence>
<evidence type="ECO:0000303" key="8">
    <source>
    </source>
</evidence>
<evidence type="ECO:0000305" key="9"/>
<evidence type="ECO:0000312" key="10">
    <source>
        <dbReference type="MGI" id="MGI:103006"/>
    </source>
</evidence>
<evidence type="ECO:0007744" key="11">
    <source>
    </source>
</evidence>
<proteinExistence type="evidence at protein level"/>
<keyword id="KW-0025">Alternative splicing</keyword>
<keyword id="KW-0965">Cell junction</keyword>
<keyword id="KW-1003">Cell membrane</keyword>
<keyword id="KW-0963">Cytoplasm</keyword>
<keyword id="KW-0472">Membrane</keyword>
<keyword id="KW-0488">Methylation</keyword>
<keyword id="KW-1185">Reference proteome</keyword>
<gene>
    <name type="primary">Epb41l5</name>
    <name type="synonym">Epb4.1l5</name>
    <name type="synonym">Kiaa1548</name>
</gene>